<reference key="1">
    <citation type="journal article" date="2007" name="J. Bacteriol.">
        <title>The complete genome sequence of Campylobacter jejuni strain 81116 (NCTC11828).</title>
        <authorList>
            <person name="Pearson B.M."/>
            <person name="Gaskin D.J.H."/>
            <person name="Segers R.P.A.M."/>
            <person name="Wells J.M."/>
            <person name="Nuijten P.J.M."/>
            <person name="van Vliet A.H.M."/>
        </authorList>
    </citation>
    <scope>NUCLEOTIDE SEQUENCE [LARGE SCALE GENOMIC DNA]</scope>
    <source>
        <strain>81116 / NCTC 11828</strain>
    </source>
</reference>
<protein>
    <recommendedName>
        <fullName evidence="1">Tetraacyldisaccharide 4'-kinase</fullName>
        <ecNumber evidence="1">2.7.1.130</ecNumber>
    </recommendedName>
    <alternativeName>
        <fullName evidence="1">Lipid A 4'-kinase</fullName>
    </alternativeName>
</protein>
<sequence>MSEEKNYELWLDNYFFKPNFWQKCLAFILLPLSVFYAFFAILNTFFRKKIVFKKPVISVGNLSFGGNGKTPLCKAIAREFDGVFIVLRGYKRKSKGLFVVKNQNEILCTLTQSGDEAMEYAFEENIKGVIVSEDRVKGIEKAFELGAKIVVLDDAFSKFHIKKFDILLESKIKPYFNFTLPSGAYRLPKFYEKRADFIALEGRDFVRYSFVKENPKAVLVTAIAKPFRLYEHFIKARACYFFKDHYEFKKEELENLLKKHNCDTLMLTFKDFVKVKDFGFKCQIIELNIELKDSLREKIKTYIKEFEQ</sequence>
<dbReference type="EC" id="2.7.1.130" evidence="1"/>
<dbReference type="EMBL" id="CP000814">
    <property type="protein sequence ID" value="ABV52361.1"/>
    <property type="molecule type" value="Genomic_DNA"/>
</dbReference>
<dbReference type="RefSeq" id="WP_002865989.1">
    <property type="nucleotide sequence ID" value="NC_009839.1"/>
</dbReference>
<dbReference type="SMR" id="A8FLM4"/>
<dbReference type="KEGG" id="cju:C8J_0762"/>
<dbReference type="HOGENOM" id="CLU_038816_1_0_7"/>
<dbReference type="UniPathway" id="UPA00359">
    <property type="reaction ID" value="UER00482"/>
</dbReference>
<dbReference type="GO" id="GO:0005886">
    <property type="term" value="C:plasma membrane"/>
    <property type="evidence" value="ECO:0007669"/>
    <property type="project" value="TreeGrafter"/>
</dbReference>
<dbReference type="GO" id="GO:0005524">
    <property type="term" value="F:ATP binding"/>
    <property type="evidence" value="ECO:0007669"/>
    <property type="project" value="UniProtKB-UniRule"/>
</dbReference>
<dbReference type="GO" id="GO:0009029">
    <property type="term" value="F:tetraacyldisaccharide 4'-kinase activity"/>
    <property type="evidence" value="ECO:0007669"/>
    <property type="project" value="UniProtKB-UniRule"/>
</dbReference>
<dbReference type="GO" id="GO:0009245">
    <property type="term" value="P:lipid A biosynthetic process"/>
    <property type="evidence" value="ECO:0007669"/>
    <property type="project" value="UniProtKB-UniRule"/>
</dbReference>
<dbReference type="GO" id="GO:0009244">
    <property type="term" value="P:lipopolysaccharide core region biosynthetic process"/>
    <property type="evidence" value="ECO:0007669"/>
    <property type="project" value="TreeGrafter"/>
</dbReference>
<dbReference type="HAMAP" id="MF_00409">
    <property type="entry name" value="LpxK"/>
    <property type="match status" value="1"/>
</dbReference>
<dbReference type="InterPro" id="IPR003758">
    <property type="entry name" value="LpxK"/>
</dbReference>
<dbReference type="NCBIfam" id="NF001892">
    <property type="entry name" value="PRK00652.1-5"/>
    <property type="match status" value="1"/>
</dbReference>
<dbReference type="PANTHER" id="PTHR42724">
    <property type="entry name" value="TETRAACYLDISACCHARIDE 4'-KINASE"/>
    <property type="match status" value="1"/>
</dbReference>
<dbReference type="PANTHER" id="PTHR42724:SF1">
    <property type="entry name" value="TETRAACYLDISACCHARIDE 4'-KINASE, MITOCHONDRIAL-RELATED"/>
    <property type="match status" value="1"/>
</dbReference>
<dbReference type="Pfam" id="PF02606">
    <property type="entry name" value="LpxK"/>
    <property type="match status" value="2"/>
</dbReference>
<feature type="chain" id="PRO_1000072275" description="Tetraacyldisaccharide 4'-kinase">
    <location>
        <begin position="1"/>
        <end position="308"/>
    </location>
</feature>
<feature type="binding site" evidence="1">
    <location>
        <begin position="63"/>
        <end position="70"/>
    </location>
    <ligand>
        <name>ATP</name>
        <dbReference type="ChEBI" id="CHEBI:30616"/>
    </ligand>
</feature>
<comment type="function">
    <text evidence="1">Transfers the gamma-phosphate of ATP to the 4'-position of a tetraacyldisaccharide 1-phosphate intermediate (termed DS-1-P) to form tetraacyldisaccharide 1,4'-bis-phosphate (lipid IVA).</text>
</comment>
<comment type="catalytic activity">
    <reaction evidence="1">
        <text>a lipid A disaccharide + ATP = a lipid IVA + ADP + H(+)</text>
        <dbReference type="Rhea" id="RHEA:67840"/>
        <dbReference type="ChEBI" id="CHEBI:15378"/>
        <dbReference type="ChEBI" id="CHEBI:30616"/>
        <dbReference type="ChEBI" id="CHEBI:176343"/>
        <dbReference type="ChEBI" id="CHEBI:176425"/>
        <dbReference type="ChEBI" id="CHEBI:456216"/>
        <dbReference type="EC" id="2.7.1.130"/>
    </reaction>
</comment>
<comment type="pathway">
    <text evidence="1">Glycolipid biosynthesis; lipid IV(A) biosynthesis; lipid IV(A) from (3R)-3-hydroxytetradecanoyl-[acyl-carrier-protein] and UDP-N-acetyl-alpha-D-glucosamine: step 6/6.</text>
</comment>
<comment type="similarity">
    <text evidence="1">Belongs to the LpxK family.</text>
</comment>
<evidence type="ECO:0000255" key="1">
    <source>
        <dbReference type="HAMAP-Rule" id="MF_00409"/>
    </source>
</evidence>
<name>LPXK_CAMJ8</name>
<keyword id="KW-0067">ATP-binding</keyword>
<keyword id="KW-0418">Kinase</keyword>
<keyword id="KW-0441">Lipid A biosynthesis</keyword>
<keyword id="KW-0444">Lipid biosynthesis</keyword>
<keyword id="KW-0443">Lipid metabolism</keyword>
<keyword id="KW-0547">Nucleotide-binding</keyword>
<keyword id="KW-0808">Transferase</keyword>
<proteinExistence type="inferred from homology"/>
<gene>
    <name evidence="1" type="primary">lpxK</name>
    <name type="ordered locus">C8J_0762</name>
</gene>
<accession>A8FLM4</accession>
<organism>
    <name type="scientific">Campylobacter jejuni subsp. jejuni serotype O:6 (strain 81116 / NCTC 11828)</name>
    <dbReference type="NCBI Taxonomy" id="407148"/>
    <lineage>
        <taxon>Bacteria</taxon>
        <taxon>Pseudomonadati</taxon>
        <taxon>Campylobacterota</taxon>
        <taxon>Epsilonproteobacteria</taxon>
        <taxon>Campylobacterales</taxon>
        <taxon>Campylobacteraceae</taxon>
        <taxon>Campylobacter</taxon>
    </lineage>
</organism>